<feature type="signal peptide" evidence="3">
    <location>
        <begin position="1"/>
        <end position="21"/>
    </location>
</feature>
<feature type="chain" id="PRO_0000021862" description="Neuropilin-1">
    <location>
        <begin position="22"/>
        <end position="928"/>
    </location>
</feature>
<feature type="topological domain" description="Extracellular" evidence="3">
    <location>
        <begin position="22"/>
        <end position="860"/>
    </location>
</feature>
<feature type="transmembrane region" description="Helical" evidence="3">
    <location>
        <begin position="861"/>
        <end position="883"/>
    </location>
</feature>
<feature type="topological domain" description="Cytoplasmic" evidence="3">
    <location>
        <begin position="884"/>
        <end position="928"/>
    </location>
</feature>
<feature type="domain" description="CUB 1" evidence="4">
    <location>
        <begin position="27"/>
        <end position="141"/>
    </location>
</feature>
<feature type="domain" description="CUB 2" evidence="4">
    <location>
        <begin position="147"/>
        <end position="265"/>
    </location>
</feature>
<feature type="domain" description="F5/8 type C 1" evidence="5">
    <location>
        <begin position="275"/>
        <end position="424"/>
    </location>
</feature>
<feature type="domain" description="F5/8 type C 2" evidence="5">
    <location>
        <begin position="431"/>
        <end position="584"/>
    </location>
</feature>
<feature type="domain" description="MAM" evidence="6">
    <location>
        <begin position="646"/>
        <end position="812"/>
    </location>
</feature>
<feature type="region of interest" description="Disordered" evidence="7">
    <location>
        <begin position="624"/>
        <end position="645"/>
    </location>
</feature>
<feature type="compositionally biased region" description="Polar residues" evidence="7">
    <location>
        <begin position="625"/>
        <end position="635"/>
    </location>
</feature>
<feature type="binding site" evidence="1">
    <location>
        <position position="195"/>
    </location>
    <ligand>
        <name>Ca(2+)</name>
        <dbReference type="ChEBI" id="CHEBI:29108"/>
    </ligand>
</feature>
<feature type="binding site" evidence="1">
    <location>
        <position position="209"/>
    </location>
    <ligand>
        <name>Ca(2+)</name>
        <dbReference type="ChEBI" id="CHEBI:29108"/>
    </ligand>
</feature>
<feature type="binding site" evidence="1">
    <location>
        <position position="250"/>
    </location>
    <ligand>
        <name>Ca(2+)</name>
        <dbReference type="ChEBI" id="CHEBI:29108"/>
    </ligand>
</feature>
<feature type="glycosylation site" description="N-linked (GlcNAc...) asparagine" evidence="3">
    <location>
        <position position="150"/>
    </location>
</feature>
<feature type="glycosylation site" description="N-linked (GlcNAc...) asparagine" evidence="3">
    <location>
        <position position="261"/>
    </location>
</feature>
<feature type="glycosylation site" description="N-linked (GlcNAc...) asparagine" evidence="3">
    <location>
        <position position="300"/>
    </location>
</feature>
<feature type="glycosylation site" description="N-linked (GlcNAc...) asparagine" evidence="3">
    <location>
        <position position="523"/>
    </location>
</feature>
<feature type="glycosylation site" description="O-linked (Xyl...) (chondroitin sulfate) serine; alternate" evidence="1">
    <location>
        <position position="613"/>
    </location>
</feature>
<feature type="glycosylation site" description="O-linked (Xyl...) (heparan sulfate) serine; alternate" evidence="1">
    <location>
        <position position="613"/>
    </location>
</feature>
<feature type="glycosylation site" description="O-linked (Xyl...) (chondroitin sulfate) serine" evidence="1">
    <location>
        <position position="834"/>
    </location>
</feature>
<feature type="glycosylation site" description="N-linked (GlcNAc...) asparagine" evidence="3">
    <location>
        <position position="844"/>
    </location>
</feature>
<feature type="disulfide bond" evidence="1">
    <location>
        <begin position="27"/>
        <end position="54"/>
    </location>
</feature>
<feature type="disulfide bond" evidence="1">
    <location>
        <begin position="82"/>
        <end position="104"/>
    </location>
</feature>
<feature type="disulfide bond" evidence="1">
    <location>
        <begin position="147"/>
        <end position="173"/>
    </location>
</feature>
<feature type="disulfide bond" evidence="1">
    <location>
        <begin position="206"/>
        <end position="228"/>
    </location>
</feature>
<feature type="disulfide bond" evidence="1">
    <location>
        <begin position="275"/>
        <end position="424"/>
    </location>
</feature>
<feature type="disulfide bond" evidence="1">
    <location>
        <begin position="431"/>
        <end position="584"/>
    </location>
</feature>
<protein>
    <recommendedName>
        <fullName>Neuropilin-1</fullName>
    </recommendedName>
    <alternativeName>
        <fullName>A5 antigen</fullName>
    </alternativeName>
    <alternativeName>
        <fullName>A5 protein</fullName>
    </alternativeName>
</protein>
<proteinExistence type="evidence at transcript level"/>
<keyword id="KW-0037">Angiogenesis</keyword>
<keyword id="KW-0106">Calcium</keyword>
<keyword id="KW-1003">Cell membrane</keyword>
<keyword id="KW-0217">Developmental protein</keyword>
<keyword id="KW-0221">Differentiation</keyword>
<keyword id="KW-1015">Disulfide bond</keyword>
<keyword id="KW-0325">Glycoprotein</keyword>
<keyword id="KW-0357">Heparan sulfate</keyword>
<keyword id="KW-0358">Heparin-binding</keyword>
<keyword id="KW-0472">Membrane</keyword>
<keyword id="KW-0479">Metal-binding</keyword>
<keyword id="KW-0496">Mitochondrion</keyword>
<keyword id="KW-0524">Neurogenesis</keyword>
<keyword id="KW-0654">Proteoglycan</keyword>
<keyword id="KW-0675">Receptor</keyword>
<keyword id="KW-1185">Reference proteome</keyword>
<keyword id="KW-0677">Repeat</keyword>
<keyword id="KW-0732">Signal</keyword>
<keyword id="KW-0812">Transmembrane</keyword>
<keyword id="KW-1133">Transmembrane helix</keyword>
<dbReference type="EMBL" id="D10467">
    <property type="protein sequence ID" value="BAA01260.1"/>
    <property type="molecule type" value="mRNA"/>
</dbReference>
<dbReference type="PIR" id="JH0466">
    <property type="entry name" value="JQ0948"/>
</dbReference>
<dbReference type="SMR" id="P28824"/>
<dbReference type="GlyCosmos" id="P28824">
    <property type="glycosylation" value="6 sites, No reported glycans"/>
</dbReference>
<dbReference type="AGR" id="Xenbase:XB-GENE-17335972"/>
<dbReference type="Xenbase" id="XB-GENE-17335972">
    <property type="gene designation" value="nrp1.S"/>
</dbReference>
<dbReference type="Proteomes" id="UP000186698">
    <property type="component" value="Unplaced"/>
</dbReference>
<dbReference type="GO" id="GO:0030424">
    <property type="term" value="C:axon"/>
    <property type="evidence" value="ECO:0000318"/>
    <property type="project" value="GO_Central"/>
</dbReference>
<dbReference type="GO" id="GO:0005925">
    <property type="term" value="C:focal adhesion"/>
    <property type="evidence" value="ECO:0000318"/>
    <property type="project" value="GO_Central"/>
</dbReference>
<dbReference type="GO" id="GO:0031966">
    <property type="term" value="C:mitochondrial membrane"/>
    <property type="evidence" value="ECO:0007669"/>
    <property type="project" value="UniProtKB-SubCell"/>
</dbReference>
<dbReference type="GO" id="GO:0005886">
    <property type="term" value="C:plasma membrane"/>
    <property type="evidence" value="ECO:0000318"/>
    <property type="project" value="GO_Central"/>
</dbReference>
<dbReference type="GO" id="GO:0008201">
    <property type="term" value="F:heparin binding"/>
    <property type="evidence" value="ECO:0007669"/>
    <property type="project" value="UniProtKB-KW"/>
</dbReference>
<dbReference type="GO" id="GO:0046872">
    <property type="term" value="F:metal ion binding"/>
    <property type="evidence" value="ECO:0007669"/>
    <property type="project" value="UniProtKB-KW"/>
</dbReference>
<dbReference type="GO" id="GO:0017154">
    <property type="term" value="F:semaphorin receptor activity"/>
    <property type="evidence" value="ECO:0000318"/>
    <property type="project" value="GO_Central"/>
</dbReference>
<dbReference type="GO" id="GO:0038085">
    <property type="term" value="F:vascular endothelial growth factor binding"/>
    <property type="evidence" value="ECO:0000318"/>
    <property type="project" value="GO_Central"/>
</dbReference>
<dbReference type="GO" id="GO:0005021">
    <property type="term" value="F:vascular endothelial growth factor receptor activity"/>
    <property type="evidence" value="ECO:0000318"/>
    <property type="project" value="GO_Central"/>
</dbReference>
<dbReference type="GO" id="GO:0007411">
    <property type="term" value="P:axon guidance"/>
    <property type="evidence" value="ECO:0000318"/>
    <property type="project" value="GO_Central"/>
</dbReference>
<dbReference type="GO" id="GO:0001755">
    <property type="term" value="P:neural crest cell migration"/>
    <property type="evidence" value="ECO:0000318"/>
    <property type="project" value="GO_Central"/>
</dbReference>
<dbReference type="GO" id="GO:0010595">
    <property type="term" value="P:positive regulation of endothelial cell migration"/>
    <property type="evidence" value="ECO:0000318"/>
    <property type="project" value="GO_Central"/>
</dbReference>
<dbReference type="GO" id="GO:0051491">
    <property type="term" value="P:positive regulation of filopodium assembly"/>
    <property type="evidence" value="ECO:0000318"/>
    <property type="project" value="GO_Central"/>
</dbReference>
<dbReference type="GO" id="GO:0030947">
    <property type="term" value="P:regulation of vascular endothelial growth factor receptor signaling pathway"/>
    <property type="evidence" value="ECO:0000318"/>
    <property type="project" value="GO_Central"/>
</dbReference>
<dbReference type="GO" id="GO:0009611">
    <property type="term" value="P:response to wounding"/>
    <property type="evidence" value="ECO:0000318"/>
    <property type="project" value="GO_Central"/>
</dbReference>
<dbReference type="GO" id="GO:0002040">
    <property type="term" value="P:sprouting angiogenesis"/>
    <property type="evidence" value="ECO:0000318"/>
    <property type="project" value="GO_Central"/>
</dbReference>
<dbReference type="GO" id="GO:0048010">
    <property type="term" value="P:vascular endothelial growth factor receptor signaling pathway"/>
    <property type="evidence" value="ECO:0000318"/>
    <property type="project" value="GO_Central"/>
</dbReference>
<dbReference type="GO" id="GO:0001570">
    <property type="term" value="P:vasculogenesis"/>
    <property type="evidence" value="ECO:0000318"/>
    <property type="project" value="GO_Central"/>
</dbReference>
<dbReference type="CDD" id="cd00041">
    <property type="entry name" value="CUB"/>
    <property type="match status" value="2"/>
</dbReference>
<dbReference type="CDD" id="cd00057">
    <property type="entry name" value="FA58C"/>
    <property type="match status" value="2"/>
</dbReference>
<dbReference type="CDD" id="cd06263">
    <property type="entry name" value="MAM"/>
    <property type="match status" value="1"/>
</dbReference>
<dbReference type="FunFam" id="2.60.120.260:FF:000002">
    <property type="entry name" value="Coagulation factor VIII"/>
    <property type="match status" value="1"/>
</dbReference>
<dbReference type="FunFam" id="2.60.120.260:FF:000013">
    <property type="entry name" value="Neuropilin"/>
    <property type="match status" value="1"/>
</dbReference>
<dbReference type="FunFam" id="2.60.120.290:FF:000003">
    <property type="entry name" value="Neuropilin"/>
    <property type="match status" value="1"/>
</dbReference>
<dbReference type="FunFam" id="2.60.120.290:FF:000010">
    <property type="entry name" value="Neuropilin"/>
    <property type="match status" value="1"/>
</dbReference>
<dbReference type="Gene3D" id="2.60.120.200">
    <property type="match status" value="1"/>
</dbReference>
<dbReference type="Gene3D" id="2.60.120.260">
    <property type="entry name" value="Galactose-binding domain-like"/>
    <property type="match status" value="2"/>
</dbReference>
<dbReference type="Gene3D" id="2.60.120.290">
    <property type="entry name" value="Spermadhesin, CUB domain"/>
    <property type="match status" value="2"/>
</dbReference>
<dbReference type="InterPro" id="IPR013320">
    <property type="entry name" value="ConA-like_dom_sf"/>
</dbReference>
<dbReference type="InterPro" id="IPR000859">
    <property type="entry name" value="CUB_dom"/>
</dbReference>
<dbReference type="InterPro" id="IPR000421">
    <property type="entry name" value="FA58C"/>
</dbReference>
<dbReference type="InterPro" id="IPR008979">
    <property type="entry name" value="Galactose-bd-like_sf"/>
</dbReference>
<dbReference type="InterPro" id="IPR000998">
    <property type="entry name" value="MAM_dom"/>
</dbReference>
<dbReference type="InterPro" id="IPR014648">
    <property type="entry name" value="Neuropilin"/>
</dbReference>
<dbReference type="InterPro" id="IPR022579">
    <property type="entry name" value="Neuropilin_C"/>
</dbReference>
<dbReference type="InterPro" id="IPR050633">
    <property type="entry name" value="Neuropilin_MCO_CoagFactor"/>
</dbReference>
<dbReference type="InterPro" id="IPR035914">
    <property type="entry name" value="Sperma_CUB_dom_sf"/>
</dbReference>
<dbReference type="PANTHER" id="PTHR46806">
    <property type="entry name" value="F5/8 TYPE C DOMAIN-CONTAINING PROTEIN"/>
    <property type="match status" value="1"/>
</dbReference>
<dbReference type="PANTHER" id="PTHR46806:SF4">
    <property type="entry name" value="NEUROPILIN-1"/>
    <property type="match status" value="1"/>
</dbReference>
<dbReference type="Pfam" id="PF00431">
    <property type="entry name" value="CUB"/>
    <property type="match status" value="2"/>
</dbReference>
<dbReference type="Pfam" id="PF11980">
    <property type="entry name" value="DUF3481"/>
    <property type="match status" value="1"/>
</dbReference>
<dbReference type="Pfam" id="PF00754">
    <property type="entry name" value="F5_F8_type_C"/>
    <property type="match status" value="2"/>
</dbReference>
<dbReference type="Pfam" id="PF00629">
    <property type="entry name" value="MAM"/>
    <property type="match status" value="1"/>
</dbReference>
<dbReference type="PIRSF" id="PIRSF036960">
    <property type="entry name" value="Neuropilin"/>
    <property type="match status" value="1"/>
</dbReference>
<dbReference type="PRINTS" id="PR00020">
    <property type="entry name" value="MAMDOMAIN"/>
</dbReference>
<dbReference type="SMART" id="SM00042">
    <property type="entry name" value="CUB"/>
    <property type="match status" value="2"/>
</dbReference>
<dbReference type="SMART" id="SM00231">
    <property type="entry name" value="FA58C"/>
    <property type="match status" value="2"/>
</dbReference>
<dbReference type="SMART" id="SM00137">
    <property type="entry name" value="MAM"/>
    <property type="match status" value="1"/>
</dbReference>
<dbReference type="SUPFAM" id="SSF49899">
    <property type="entry name" value="Concanavalin A-like lectins/glucanases"/>
    <property type="match status" value="1"/>
</dbReference>
<dbReference type="SUPFAM" id="SSF49785">
    <property type="entry name" value="Galactose-binding domain-like"/>
    <property type="match status" value="2"/>
</dbReference>
<dbReference type="SUPFAM" id="SSF49854">
    <property type="entry name" value="Spermadhesin, CUB domain"/>
    <property type="match status" value="2"/>
</dbReference>
<dbReference type="PROSITE" id="PS01180">
    <property type="entry name" value="CUB"/>
    <property type="match status" value="2"/>
</dbReference>
<dbReference type="PROSITE" id="PS01285">
    <property type="entry name" value="FA58C_1"/>
    <property type="match status" value="2"/>
</dbReference>
<dbReference type="PROSITE" id="PS01286">
    <property type="entry name" value="FA58C_2"/>
    <property type="match status" value="2"/>
</dbReference>
<dbReference type="PROSITE" id="PS50022">
    <property type="entry name" value="FA58C_3"/>
    <property type="match status" value="2"/>
</dbReference>
<dbReference type="PROSITE" id="PS00740">
    <property type="entry name" value="MAM_1"/>
    <property type="match status" value="1"/>
</dbReference>
<dbReference type="PROSITE" id="PS50060">
    <property type="entry name" value="MAM_2"/>
    <property type="match status" value="1"/>
</dbReference>
<sequence length="928" mass="103416">MLLRLLSCCCWLLCSLRSSWASRNDKCGDTIKITSPSYLTSAGYPHSYPPSQRCEWLIQAPEHYQRIMINFNPHFDLEDRECKYDYVEVIDGDNANGQLLGKYCGKIAPSPLVSTGPSIFIRFVSDYETPGAGFSIRYEVFKTGPECSRNFTSSNGVIKSPKYPEKYPNALECTYIIFAPKMQEIVLEFESFELEADSNAPGGQTCRYDWLGIWDGFPGVGPHIGRYCGQNTPGRVRSFTGILSMIFHTDSAIAKEGFFANFSVVQSNTDEDFQCKEALGMESGEIHFDQISVSSQYSMNWSAERSRLNYVENGWTPGEDTVKEWIQVDLENLRFVSGIGTQGAISKETKKKYFVKSYKVDISSNGEDWITLKDGNKHLVFTGNTDATDVVYRPFSKPVITRFVRLRPVTWENGISLRFELYGCKITDYPCSRMLGMVSGLISDSQITASSQVDRNWVPELARLVTSRSGWALPPSNTHPYTKEWLQIDLAEEKIVRGVIIQGGKHKENKVFMRKFKIGYSNNGTEWEMIMDSSKNKPKTFEGNTNYDTPELRTFAHITTGFIRIIPERASASGLALRLELLGCEVETPTSIPTTPEVNGGDECEGDLANCHSGTDEGFKLTVGATGQSTETPTVEASPEEPDMTHSDLDCKFGWGSQKTVCNWQHDISSDLKWAVLNSKTGPVQDHTGDGNFIYSEADERHEGRAARLMSPVVSSSRSAHCLTFWYHMDGSHVGTLSIKLKYEMEEDFDQTLWTVSGNQGDQWKEARVVLHKTMKQYQVIVEGTVGKGSAGGIAVDDIIIANHISPSQCRAPEIDDSANKIGEEDSEIDKTGSTPNYALNEFNESISKKPGNVLKTLDPILITIIAMSALGVLLGAICGVVLYCACWHNGMSERNLSALENYNFELVDGVKLKKDKLNTQNSYSEAS</sequence>
<gene>
    <name type="primary">nrp1</name>
</gene>
<comment type="function">
    <text evidence="1 2">Receptor involved in the development of the cardiovascular system, in angiogenesis, in the formation of certain neuronal circuits and in organogenesis outside the nervous system (By similarity). Mediates the chemorepulsant activity of semaphorins. Binding to VEGFA initiates a signaling pathway needed for motor neuron axon guidance and cell body migration, including for the caudal migration of facial motor neurons from rhombomere 4 to rhombomere 6 during embryonic development (By similarity). Regulates mitochondrial iron transport via interaction (By similarity).</text>
</comment>
<comment type="subunit">
    <text evidence="1">Homodimer, and heterodimer.</text>
</comment>
<comment type="subcellular location">
    <subcellularLocation>
        <location evidence="1">Mitochondrion membrane</location>
        <topology evidence="3">Single-pass type I membrane protein</topology>
    </subcellularLocation>
    <subcellularLocation>
        <location evidence="1">Cell membrane</location>
        <topology evidence="3">Single-pass type I membrane protein</topology>
    </subcellularLocation>
</comment>
<comment type="tissue specificity">
    <text>Retinal ganglion cells and visual center neurons.</text>
</comment>
<comment type="similarity">
    <text evidence="8">Belongs to the neuropilin family.</text>
</comment>
<name>NRP1_XENLA</name>
<reference key="1">
    <citation type="journal article" date="1991" name="Neuron">
        <title>The A5 antigen, a candidate for the neuronal recognition molecule, has homologies to complement components and coagulation factors.</title>
        <authorList>
            <person name="Takagi S."/>
            <person name="Hirata T."/>
            <person name="Agata K."/>
            <person name="Mochii M."/>
            <person name="Eguchi G."/>
            <person name="Fujisawa H."/>
        </authorList>
    </citation>
    <scope>NUCLEOTIDE SEQUENCE [MRNA]</scope>
    <source>
        <tissue>Brain</tissue>
    </source>
</reference>
<organism>
    <name type="scientific">Xenopus laevis</name>
    <name type="common">African clawed frog</name>
    <dbReference type="NCBI Taxonomy" id="8355"/>
    <lineage>
        <taxon>Eukaryota</taxon>
        <taxon>Metazoa</taxon>
        <taxon>Chordata</taxon>
        <taxon>Craniata</taxon>
        <taxon>Vertebrata</taxon>
        <taxon>Euteleostomi</taxon>
        <taxon>Amphibia</taxon>
        <taxon>Batrachia</taxon>
        <taxon>Anura</taxon>
        <taxon>Pipoidea</taxon>
        <taxon>Pipidae</taxon>
        <taxon>Xenopodinae</taxon>
        <taxon>Xenopus</taxon>
        <taxon>Xenopus</taxon>
    </lineage>
</organism>
<evidence type="ECO:0000250" key="1">
    <source>
        <dbReference type="UniProtKB" id="O14786"/>
    </source>
</evidence>
<evidence type="ECO:0000250" key="2">
    <source>
        <dbReference type="UniProtKB" id="P97333"/>
    </source>
</evidence>
<evidence type="ECO:0000255" key="3"/>
<evidence type="ECO:0000255" key="4">
    <source>
        <dbReference type="PROSITE-ProRule" id="PRU00059"/>
    </source>
</evidence>
<evidence type="ECO:0000255" key="5">
    <source>
        <dbReference type="PROSITE-ProRule" id="PRU00081"/>
    </source>
</evidence>
<evidence type="ECO:0000255" key="6">
    <source>
        <dbReference type="PROSITE-ProRule" id="PRU00128"/>
    </source>
</evidence>
<evidence type="ECO:0000256" key="7">
    <source>
        <dbReference type="SAM" id="MobiDB-lite"/>
    </source>
</evidence>
<evidence type="ECO:0000305" key="8"/>
<accession>P28824</accession>